<proteinExistence type="evidence at transcript level"/>
<dbReference type="EMBL" id="AJ413272">
    <property type="protein sequence ID" value="CAC88374.1"/>
    <property type="molecule type" value="Genomic_DNA"/>
</dbReference>
<dbReference type="SMR" id="Q8TFF3"/>
<dbReference type="OMA" id="SPMIKFE"/>
<dbReference type="GO" id="GO:0005634">
    <property type="term" value="C:nucleus"/>
    <property type="evidence" value="ECO:0007669"/>
    <property type="project" value="UniProtKB-SubCell"/>
</dbReference>
<dbReference type="GO" id="GO:0003677">
    <property type="term" value="F:DNA binding"/>
    <property type="evidence" value="ECO:0007669"/>
    <property type="project" value="UniProtKB-KW"/>
</dbReference>
<dbReference type="GO" id="GO:0000981">
    <property type="term" value="F:DNA-binding transcription factor activity, RNA polymerase II-specific"/>
    <property type="evidence" value="ECO:0007669"/>
    <property type="project" value="InterPro"/>
</dbReference>
<dbReference type="GO" id="GO:0045944">
    <property type="term" value="P:positive regulation of transcription by RNA polymerase II"/>
    <property type="evidence" value="ECO:0007669"/>
    <property type="project" value="InterPro"/>
</dbReference>
<dbReference type="GO" id="GO:0006986">
    <property type="term" value="P:response to unfolded protein"/>
    <property type="evidence" value="ECO:0007669"/>
    <property type="project" value="UniProtKB-KW"/>
</dbReference>
<dbReference type="CDD" id="cd14710">
    <property type="entry name" value="bZIP_HAC1-like"/>
    <property type="match status" value="1"/>
</dbReference>
<dbReference type="InterPro" id="IPR004827">
    <property type="entry name" value="bZIP"/>
</dbReference>
<dbReference type="InterPro" id="IPR046347">
    <property type="entry name" value="bZIP_sf"/>
</dbReference>
<dbReference type="InterPro" id="IPR044280">
    <property type="entry name" value="Hac1/HY5"/>
</dbReference>
<dbReference type="PANTHER" id="PTHR46714">
    <property type="entry name" value="TRANSCRIPTIONAL ACTIVATOR HAC1"/>
    <property type="match status" value="1"/>
</dbReference>
<dbReference type="PANTHER" id="PTHR46714:SF6">
    <property type="entry name" value="TRANSCRIPTIONAL ACTIVATOR HAC1"/>
    <property type="match status" value="1"/>
</dbReference>
<dbReference type="Pfam" id="PF07716">
    <property type="entry name" value="bZIP_2"/>
    <property type="match status" value="1"/>
</dbReference>
<dbReference type="SUPFAM" id="SSF57959">
    <property type="entry name" value="Leucine zipper domain"/>
    <property type="match status" value="1"/>
</dbReference>
<dbReference type="PROSITE" id="PS50217">
    <property type="entry name" value="BZIP"/>
    <property type="match status" value="1"/>
</dbReference>
<reference key="1">
    <citation type="journal article" date="2003" name="Mol. Microbiol.">
        <title>Activation mechanisms of the HAC1-mediated unfolded protein response in filamentous fungi.</title>
        <authorList>
            <person name="Saloheimo M.L.A."/>
            <person name="Valkonen M."/>
            <person name="Penttilae M.E."/>
        </authorList>
    </citation>
    <scope>NUCLEOTIDE SEQUENCE [GENOMIC DNA]</scope>
    <scope>ALTERNATIVE SPLICING</scope>
    <scope>INDUCTION</scope>
    <source>
        <strain>ATCC 56765 / Rut C-30</strain>
    </source>
</reference>
<evidence type="ECO:0000250" key="1"/>
<evidence type="ECO:0000255" key="2">
    <source>
        <dbReference type="PROSITE-ProRule" id="PRU00978"/>
    </source>
</evidence>
<evidence type="ECO:0000256" key="3">
    <source>
        <dbReference type="SAM" id="MobiDB-lite"/>
    </source>
</evidence>
<evidence type="ECO:0000269" key="4">
    <source>
    </source>
</evidence>
<evidence type="ECO:0000305" key="5"/>
<accession>Q8TFF3</accession>
<sequence>MAFQQSSPLVKFEASPAESFLSAPGDNFTSLFADSTPSTLNPRDMMTPDSVADIDSRLSVIPESQDAEDDESHSTSATAPSTSEKKPVKKRKSWGQVLPEPKTNLPPRKRAKTEDEKEQRRVERVLRNRRAAQSSRERKRLEVEALEKRNKELETLLINVQKTNLILVEELNRFRRSSGVVTRSSSPLDSLQDSITLSQQLFGSRDGQTMSNPEQSLMDQIMRSAANPTVNPASLSPSLPPISDKEFQTKEEDEEQADEDEEMEQTWHETKEAAAAKEKNSKQSRVSTDSTQRPAVSIGGDAAVPVFSDDAGANCLGLDPVHQDDGPFSIGHSFGLSAALDADRYLLESQLLASPNASTVDDDYLAGDSAACFTNPLPSDYDFDINDFLTDDANHAAYDIVAASNYAAADRELDLEIHDPENQIPSRHSIQQPQSGASSHGCDDGGIAVGV</sequence>
<organism>
    <name type="scientific">Hypocrea jecorina</name>
    <name type="common">Trichoderma reesei</name>
    <dbReference type="NCBI Taxonomy" id="51453"/>
    <lineage>
        <taxon>Eukaryota</taxon>
        <taxon>Fungi</taxon>
        <taxon>Dikarya</taxon>
        <taxon>Ascomycota</taxon>
        <taxon>Pezizomycotina</taxon>
        <taxon>Sordariomycetes</taxon>
        <taxon>Hypocreomycetidae</taxon>
        <taxon>Hypocreales</taxon>
        <taxon>Hypocreaceae</taxon>
        <taxon>Trichoderma</taxon>
    </lineage>
</organism>
<feature type="chain" id="PRO_0000252297" description="Transcriptional activator hac1">
    <location>
        <begin position="1"/>
        <end position="451"/>
    </location>
</feature>
<feature type="domain" description="bZIP" evidence="2">
    <location>
        <begin position="118"/>
        <end position="181"/>
    </location>
</feature>
<feature type="region of interest" description="Disordered" evidence="3">
    <location>
        <begin position="1"/>
        <end position="137"/>
    </location>
</feature>
<feature type="region of interest" description="Basic motif" evidence="2">
    <location>
        <begin position="120"/>
        <end position="140"/>
    </location>
</feature>
<feature type="region of interest" description="Leucine-zipper" evidence="2">
    <location>
        <begin position="146"/>
        <end position="153"/>
    </location>
</feature>
<feature type="region of interest" description="Disordered" evidence="3">
    <location>
        <begin position="228"/>
        <end position="296"/>
    </location>
</feature>
<feature type="compositionally biased region" description="Polar residues" evidence="3">
    <location>
        <begin position="27"/>
        <end position="41"/>
    </location>
</feature>
<feature type="compositionally biased region" description="Basic and acidic residues" evidence="3">
    <location>
        <begin position="112"/>
        <end position="126"/>
    </location>
</feature>
<feature type="compositionally biased region" description="Acidic residues" evidence="3">
    <location>
        <begin position="251"/>
        <end position="264"/>
    </location>
</feature>
<feature type="compositionally biased region" description="Basic and acidic residues" evidence="3">
    <location>
        <begin position="265"/>
        <end position="281"/>
    </location>
</feature>
<feature type="compositionally biased region" description="Polar residues" evidence="3">
    <location>
        <begin position="283"/>
        <end position="294"/>
    </location>
</feature>
<feature type="splice variant" id="VSP_020904" description="In isoform U." evidence="5">
    <original>VSIGGDAAVPVFSDDAGANCLGLDPVHQDDGPFSIGHSFGLSAALDADRYLLESQLLASPNASTVDDDYLAGDSAACFTNPLPSDYDFDINDFLTDDANHAAYDIVAASNYAAADRELDLEIHDPENQIPSRHSIQQPQSGASSHGCDDGGIAVGV</original>
    <variation>EMLCDPQCQSVEMPLSLSSQTTPAQTALAWTLFIRMMVLSASAILSACQRPLMQIAISSKANFSLRPTPQLLTTIIWLVTLPPASRILSPPTTTSTSTTSSQTTQTTPPMTLWQRATMPLRTASSTSRSTTLRIRSLRDILSSSPSLARPLMDATMAALRLVSEGRDDRGGIPASESCATRGDCELERCLRSVTLPSREVLITLWWAVKVEERRIRLRQHKKQAAALDPEKRASLADKKNRQQQQQQHQYQIPSFSK</variation>
    <location>
        <begin position="296"/>
        <end position="451"/>
    </location>
</feature>
<keyword id="KW-0010">Activator</keyword>
<keyword id="KW-0025">Alternative splicing</keyword>
<keyword id="KW-0238">DNA-binding</keyword>
<keyword id="KW-0539">Nucleus</keyword>
<keyword id="KW-0804">Transcription</keyword>
<keyword id="KW-0805">Transcription regulation</keyword>
<keyword id="KW-0834">Unfolded protein response</keyword>
<name>HAC1_HYPJE</name>
<comment type="function">
    <text evidence="1">Transcriptional activator involved in the unfolded protein response (UPR) pathway. Recognizes and binds to the UPR element (UPRE) in the promoter of UPR-regulated genes. Increases the synthesis of endoplasmic reticulum-resident proteins required for protein folding as well as components of the secretory pathway (By similarity).</text>
</comment>
<comment type="subunit">
    <text evidence="1">Homodimer.</text>
</comment>
<comment type="subcellular location">
    <subcellularLocation>
        <location evidence="5">Nucleus</location>
    </subcellularLocation>
</comment>
<comment type="alternative products">
    <event type="alternative splicing"/>
    <isoform>
        <id>Q8TFF3-1</id>
        <name>I</name>
        <name>Induced</name>
        <sequence type="displayed"/>
    </isoform>
    <isoform>
        <id>Q8TFF3-2</id>
        <name>U</name>
        <name>Uninduced</name>
        <sequence type="described" ref="VSP_020904"/>
    </isoform>
    <text>Splicing occurs by a non-spliceosomal, regulated splicing mechanism when UPR is induced.</text>
</comment>
<comment type="induction">
    <text evidence="4">By the unfolded protein response pathway. Accumulation of unfolded proteins in the ER leads to splicing of the hac1 precursor mRNA to produce the mature form.</text>
</comment>
<comment type="miscellaneous">
    <molecule>Isoform I</molecule>
    <text>Induced and active isoform.</text>
</comment>
<comment type="miscellaneous">
    <molecule>Isoform U</molecule>
    <text evidence="5">Probably not translated.</text>
</comment>
<comment type="similarity">
    <text evidence="5">Belongs to the bZIP family.</text>
</comment>
<gene>
    <name type="primary">hac1</name>
</gene>
<protein>
    <recommendedName>
        <fullName>Transcriptional activator hac1</fullName>
    </recommendedName>
</protein>